<accession>P0DPD6</accession>
<accession>A5PLK8</accession>
<accession>O60344</accession>
<accession>Q6NTG7</accession>
<accession>Q6UW36</accession>
<accession>Q8NFD7</accession>
<accession>Q96NX3</accession>
<accession>Q96NX4</accession>
<accession>Q9BRZ8</accession>
<gene>
    <name evidence="14" type="primary">ECE2</name>
    <name evidence="11" type="synonym">KIAA0604</name>
    <name evidence="10" type="ORF">UNQ403/PRO740</name>
</gene>
<sequence length="811" mass="91211">MNVALQELGAGSNMVEYKRATLRDEDAPETPVEGGASPDAMEVGKGASPFSPGPSPGMTPGTPRSSGLFWRVTCPHLRSISGLCSRTMVGFQKGTRQLLGSRTQLELVLAGASLLLAALLLGCLVALGVQYHRDPSHSTCLTEACIRVAGKILESLDRGVSPCEDFYQFSCGGWIRRNPLPDGRSRWNTFNSLWDQNQAILKHLLENTTFNSSSEAEQKTQRFYLSCLQVERIEELGAQPLRDLIEKIGGWNITGPWDQDNFMEVLKAVAGTYRATPFFTVYISADSKSSNSNVIQVDQSGLFLPSRDYYLNRTANEKVLTAYLDYMEELGMLLGGRPTSTREQMQQVLELEIQLANITVPQDQRRDEEKIYHKMSISELQALAPSMDWLEFLSFLLSPLELSDSEPVVVYGMDYLQQVSELINRTEPSILNNYLIWNLVQKTTSSLDRRFESAQEKLLETLYGTKKSCVPRWQTCISNTDDALGFALGSLFVKATFDRQSKEIAEGMISEIRTAFEEALGQLVWMDEKTRQAAKEKADAIYDMIGFPDFILEPKELDDVYDGYEISEDSFFQNMLNLYNFSAKVMADQLRKPPSRDQWSMTPQTVNAYYLPTKNEIVFPAGILQAPFYARNHPKALNFGGIGVVMGHELTHAFDDQGREYDKEGNLRPWWQNESLAAFRNHTACMEEQYNQYQVNGERLNGRQTLGENIADNGGLKAAYNAYKAWLRKHGEEQQLPAVGLTNHQLFFVGFAQVWCSVRTPESSHEGLVTDPHSPARFRVLGTLSNSRDFLRHFGCPVGSPMNPGQLCEVW</sequence>
<evidence type="ECO:0000250" key="1">
    <source>
        <dbReference type="UniProtKB" id="B2RQR8"/>
    </source>
</evidence>
<evidence type="ECO:0000250" key="2">
    <source>
        <dbReference type="UniProtKB" id="F1N476"/>
    </source>
</evidence>
<evidence type="ECO:0000250" key="3">
    <source>
        <dbReference type="UniProtKB" id="P42892"/>
    </source>
</evidence>
<evidence type="ECO:0000255" key="4"/>
<evidence type="ECO:0000255" key="5">
    <source>
        <dbReference type="PROSITE-ProRule" id="PRU01233"/>
    </source>
</evidence>
<evidence type="ECO:0000255" key="6">
    <source>
        <dbReference type="PROSITE-ProRule" id="PRU10095"/>
    </source>
</evidence>
<evidence type="ECO:0000256" key="7">
    <source>
        <dbReference type="SAM" id="MobiDB-lite"/>
    </source>
</evidence>
<evidence type="ECO:0000269" key="8">
    <source>
    </source>
</evidence>
<evidence type="ECO:0000303" key="9">
    <source>
    </source>
</evidence>
<evidence type="ECO:0000303" key="10">
    <source>
    </source>
</evidence>
<evidence type="ECO:0000303" key="11">
    <source>
    </source>
</evidence>
<evidence type="ECO:0000303" key="12">
    <source ref="2"/>
</evidence>
<evidence type="ECO:0000305" key="13"/>
<evidence type="ECO:0000312" key="14">
    <source>
        <dbReference type="HGNC" id="HGNC:13275"/>
    </source>
</evidence>
<organism>
    <name type="scientific">Homo sapiens</name>
    <name type="common">Human</name>
    <dbReference type="NCBI Taxonomy" id="9606"/>
    <lineage>
        <taxon>Eukaryota</taxon>
        <taxon>Metazoa</taxon>
        <taxon>Chordata</taxon>
        <taxon>Craniata</taxon>
        <taxon>Vertebrata</taxon>
        <taxon>Euteleostomi</taxon>
        <taxon>Mammalia</taxon>
        <taxon>Eutheria</taxon>
        <taxon>Euarchontoglires</taxon>
        <taxon>Primates</taxon>
        <taxon>Haplorrhini</taxon>
        <taxon>Catarrhini</taxon>
        <taxon>Hominidae</taxon>
        <taxon>Homo</taxon>
    </lineage>
</organism>
<dbReference type="EC" id="3.4.24.71" evidence="8"/>
<dbReference type="EMBL" id="AF428264">
    <property type="protein sequence ID" value="AAL30387.1"/>
    <property type="molecule type" value="mRNA"/>
</dbReference>
<dbReference type="EMBL" id="AF192531">
    <property type="protein sequence ID" value="AAG28399.1"/>
    <property type="molecule type" value="mRNA"/>
</dbReference>
<dbReference type="EMBL" id="AF521189">
    <property type="protein sequence ID" value="AAM77664.1"/>
    <property type="molecule type" value="mRNA"/>
</dbReference>
<dbReference type="EMBL" id="AB011176">
    <property type="protein sequence ID" value="BAA25530.2"/>
    <property type="status" value="ALT_INIT"/>
    <property type="molecule type" value="mRNA"/>
</dbReference>
<dbReference type="EMBL" id="AY359003">
    <property type="protein sequence ID" value="AAQ89362.1"/>
    <property type="molecule type" value="mRNA"/>
</dbReference>
<dbReference type="EMBL" id="AC061705">
    <property type="status" value="NOT_ANNOTATED_CDS"/>
    <property type="molecule type" value="Genomic_DNA"/>
</dbReference>
<dbReference type="EMBL" id="AC078797">
    <property type="status" value="NOT_ANNOTATED_CDS"/>
    <property type="molecule type" value="Genomic_DNA"/>
</dbReference>
<dbReference type="EMBL" id="BC142950">
    <property type="protein sequence ID" value="AAI42951.1"/>
    <property type="molecule type" value="mRNA"/>
</dbReference>
<dbReference type="CCDS" id="CCDS33899.1">
    <molecule id="P0DPD6-3"/>
</dbReference>
<dbReference type="CCDS" id="CCDS43179.1"/>
<dbReference type="CCDS" id="CCDS46969.1">
    <molecule id="P0DPD6-2"/>
</dbReference>
<dbReference type="RefSeq" id="NP_001032401.1">
    <molecule id="P0DPD6-3"/>
    <property type="nucleotide sequence ID" value="NM_001037324.3"/>
</dbReference>
<dbReference type="RefSeq" id="NP_001093590.1">
    <molecule id="P0DPD6-4"/>
    <property type="nucleotide sequence ID" value="NM_001100120.2"/>
</dbReference>
<dbReference type="RefSeq" id="NP_001093591.1">
    <molecule id="P0DPD6-2"/>
    <property type="nucleotide sequence ID" value="NM_001100121.2"/>
</dbReference>
<dbReference type="RefSeq" id="NP_055508.3">
    <property type="nucleotide sequence ID" value="NM_014693.3"/>
</dbReference>
<dbReference type="SMR" id="P0DPD6"/>
<dbReference type="FunCoup" id="P0DPD6">
    <property type="interactions" value="167"/>
</dbReference>
<dbReference type="IntAct" id="P0DPD6">
    <property type="interactions" value="18"/>
</dbReference>
<dbReference type="STRING" id="9606.ENSP00000350066"/>
<dbReference type="ChEMBL" id="CHEMBL5890"/>
<dbReference type="GuidetoPHARMACOLOGY" id="1616"/>
<dbReference type="GlyCosmos" id="P0DPD6">
    <property type="glycosylation" value="9 sites, No reported glycans"/>
</dbReference>
<dbReference type="GlyGen" id="P0DPD6">
    <property type="glycosylation" value="10 sites, 1 O-linked glycan (1 site)"/>
</dbReference>
<dbReference type="iPTMnet" id="P0DPD6"/>
<dbReference type="PhosphoSitePlus" id="P0DPD6"/>
<dbReference type="jPOST" id="P0DPD6"/>
<dbReference type="MassIVE" id="P0DPD6"/>
<dbReference type="PeptideAtlas" id="P0DPD6"/>
<dbReference type="Antibodypedia" id="33804">
    <property type="antibodies" value="106 antibodies from 26 providers"/>
</dbReference>
<dbReference type="DNASU" id="9718"/>
<dbReference type="Ensembl" id="ENST00000357474.9">
    <molecule id="P0DPD6-4"/>
    <property type="protein sequence ID" value="ENSP00000350066.5"/>
    <property type="gene ID" value="ENSG00000145194.19"/>
</dbReference>
<dbReference type="Ensembl" id="ENST00000359140.8">
    <molecule id="P0DPD6-3"/>
    <property type="protein sequence ID" value="ENSP00000352052.4"/>
    <property type="gene ID" value="ENSG00000145194.19"/>
</dbReference>
<dbReference type="Ensembl" id="ENST00000404464.8">
    <molecule id="P0DPD6-2"/>
    <property type="protein sequence ID" value="ENSP00000385846.3"/>
    <property type="gene ID" value="ENSG00000145194.19"/>
</dbReference>
<dbReference type="GeneID" id="110599583"/>
<dbReference type="GeneID" id="9718"/>
<dbReference type="KEGG" id="hsa:110599583"/>
<dbReference type="KEGG" id="hsa:9718"/>
<dbReference type="MANE-Select" id="ENST00000404464.8">
    <molecule id="P0DPD6-2"/>
    <property type="protein sequence ID" value="ENSP00000385846.3"/>
    <property type="RefSeq nucleotide sequence ID" value="NM_001100121.2"/>
    <property type="RefSeq protein sequence ID" value="NP_001093591.1"/>
</dbReference>
<dbReference type="AGR" id="HGNC:13275"/>
<dbReference type="AGR" id="HGNC:53615"/>
<dbReference type="CTD" id="110599583"/>
<dbReference type="CTD" id="9718"/>
<dbReference type="DisGeNET" id="110599583"/>
<dbReference type="DisGeNET" id="9718"/>
<dbReference type="GeneCards" id="ECE2"/>
<dbReference type="HGNC" id="HGNC:13275">
    <property type="gene designation" value="ECE2"/>
</dbReference>
<dbReference type="HPA" id="ENSG00000145194">
    <property type="expression patterns" value="Tissue enhanced (brain, pancreas, pituitary gland)"/>
</dbReference>
<dbReference type="MalaCards" id="ECE2"/>
<dbReference type="MIM" id="610145">
    <property type="type" value="gene"/>
</dbReference>
<dbReference type="neXtProt" id="NX_P0DPD6"/>
<dbReference type="OpenTargets" id="ENSG00000145194"/>
<dbReference type="VEuPathDB" id="HostDB:ENSG00000145194"/>
<dbReference type="GeneTree" id="ENSGT00940000156921"/>
<dbReference type="InParanoid" id="P0DPD6"/>
<dbReference type="OMA" id="FGWAQVW"/>
<dbReference type="OrthoDB" id="6475849at2759"/>
<dbReference type="PAN-GO" id="P0DPD6">
    <property type="GO annotations" value="3 GO annotations based on evolutionary models"/>
</dbReference>
<dbReference type="PathwayCommons" id="P0DPD6"/>
<dbReference type="Reactome" id="R-HSA-375276">
    <property type="pathway name" value="Peptide ligand-binding receptors"/>
</dbReference>
<dbReference type="SABIO-RK" id="P0DPD6"/>
<dbReference type="SignaLink" id="P0DPD6"/>
<dbReference type="Pharos" id="P0DPD6">
    <property type="development level" value="Tchem"/>
</dbReference>
<dbReference type="PRO" id="PR:P0DPD6"/>
<dbReference type="Proteomes" id="UP000005640">
    <property type="component" value="Chromosome 3"/>
</dbReference>
<dbReference type="Bgee" id="ENSG00000145194">
    <property type="expression patterns" value="Expressed in cerebellar hemisphere and 69 other cell types or tissues"/>
</dbReference>
<dbReference type="ExpressionAtlas" id="P0DPD6">
    <property type="expression patterns" value="baseline and differential"/>
</dbReference>
<dbReference type="GO" id="GO:0030659">
    <property type="term" value="C:cytoplasmic vesicle membrane"/>
    <property type="evidence" value="ECO:0000314"/>
    <property type="project" value="UniProtKB"/>
</dbReference>
<dbReference type="GO" id="GO:0000139">
    <property type="term" value="C:Golgi membrane"/>
    <property type="evidence" value="ECO:0000250"/>
    <property type="project" value="UniProtKB"/>
</dbReference>
<dbReference type="GO" id="GO:0005886">
    <property type="term" value="C:plasma membrane"/>
    <property type="evidence" value="ECO:0000318"/>
    <property type="project" value="GO_Central"/>
</dbReference>
<dbReference type="GO" id="GO:0030658">
    <property type="term" value="C:transport vesicle membrane"/>
    <property type="evidence" value="ECO:0000250"/>
    <property type="project" value="UniProtKB"/>
</dbReference>
<dbReference type="GO" id="GO:0046872">
    <property type="term" value="F:metal ion binding"/>
    <property type="evidence" value="ECO:0007669"/>
    <property type="project" value="UniProtKB-KW"/>
</dbReference>
<dbReference type="GO" id="GO:0004222">
    <property type="term" value="F:metalloendopeptidase activity"/>
    <property type="evidence" value="ECO:0000314"/>
    <property type="project" value="UniProtKB"/>
</dbReference>
<dbReference type="GO" id="GO:0008168">
    <property type="term" value="F:methyltransferase activity"/>
    <property type="evidence" value="ECO:0007669"/>
    <property type="project" value="UniProtKB-KW"/>
</dbReference>
<dbReference type="GO" id="GO:0007267">
    <property type="term" value="P:cell-cell signaling"/>
    <property type="evidence" value="ECO:0000304"/>
    <property type="project" value="UniProtKB"/>
</dbReference>
<dbReference type="GO" id="GO:0007186">
    <property type="term" value="P:G protein-coupled receptor signaling pathway"/>
    <property type="evidence" value="ECO:0000304"/>
    <property type="project" value="Reactome"/>
</dbReference>
<dbReference type="GO" id="GO:0032259">
    <property type="term" value="P:methylation"/>
    <property type="evidence" value="ECO:0007669"/>
    <property type="project" value="UniProtKB-KW"/>
</dbReference>
<dbReference type="GO" id="GO:0016486">
    <property type="term" value="P:peptide hormone processing"/>
    <property type="evidence" value="ECO:0000314"/>
    <property type="project" value="UniProtKB"/>
</dbReference>
<dbReference type="GO" id="GO:0016485">
    <property type="term" value="P:protein processing"/>
    <property type="evidence" value="ECO:0000318"/>
    <property type="project" value="GO_Central"/>
</dbReference>
<dbReference type="CDD" id="cd08662">
    <property type="entry name" value="M13"/>
    <property type="match status" value="1"/>
</dbReference>
<dbReference type="FunFam" id="1.10.1380.10:FF:000001">
    <property type="entry name" value="endothelin-converting enzyme 2 isoform X1"/>
    <property type="match status" value="1"/>
</dbReference>
<dbReference type="Gene3D" id="3.40.390.10">
    <property type="entry name" value="Collagenase (Catalytic Domain)"/>
    <property type="match status" value="1"/>
</dbReference>
<dbReference type="Gene3D" id="1.10.1380.10">
    <property type="entry name" value="Neutral endopeptidase , domain2"/>
    <property type="match status" value="1"/>
</dbReference>
<dbReference type="InterPro" id="IPR024079">
    <property type="entry name" value="MetalloPept_cat_dom_sf"/>
</dbReference>
<dbReference type="InterPro" id="IPR000718">
    <property type="entry name" value="Peptidase_M13"/>
</dbReference>
<dbReference type="InterPro" id="IPR018497">
    <property type="entry name" value="Peptidase_M13_C"/>
</dbReference>
<dbReference type="InterPro" id="IPR042089">
    <property type="entry name" value="Peptidase_M13_dom_2"/>
</dbReference>
<dbReference type="InterPro" id="IPR008753">
    <property type="entry name" value="Peptidase_M13_N"/>
</dbReference>
<dbReference type="PANTHER" id="PTHR11733:SF127">
    <property type="entry name" value="EEF1AKMT4-ECE2 READTHROUGH TRANSCRIPT PROTEIN-RELATED"/>
    <property type="match status" value="1"/>
</dbReference>
<dbReference type="PANTHER" id="PTHR11733">
    <property type="entry name" value="ZINC METALLOPROTEASE FAMILY M13 NEPRILYSIN-RELATED"/>
    <property type="match status" value="1"/>
</dbReference>
<dbReference type="Pfam" id="PF01431">
    <property type="entry name" value="Peptidase_M13"/>
    <property type="match status" value="1"/>
</dbReference>
<dbReference type="Pfam" id="PF05649">
    <property type="entry name" value="Peptidase_M13_N"/>
    <property type="match status" value="1"/>
</dbReference>
<dbReference type="PRINTS" id="PR00786">
    <property type="entry name" value="NEPRILYSIN"/>
</dbReference>
<dbReference type="SUPFAM" id="SSF55486">
    <property type="entry name" value="Metalloproteases ('zincins'), catalytic domain"/>
    <property type="match status" value="1"/>
</dbReference>
<dbReference type="PROSITE" id="PS51885">
    <property type="entry name" value="NEPRILYSIN"/>
    <property type="match status" value="1"/>
</dbReference>
<dbReference type="PROSITE" id="PS00142">
    <property type="entry name" value="ZINC_PROTEASE"/>
    <property type="match status" value="1"/>
</dbReference>
<proteinExistence type="evidence at protein level"/>
<keyword id="KW-0025">Alternative splicing</keyword>
<keyword id="KW-0968">Cytoplasmic vesicle</keyword>
<keyword id="KW-1015">Disulfide bond</keyword>
<keyword id="KW-0325">Glycoprotein</keyword>
<keyword id="KW-0333">Golgi apparatus</keyword>
<keyword id="KW-0378">Hydrolase</keyword>
<keyword id="KW-0472">Membrane</keyword>
<keyword id="KW-0479">Metal-binding</keyword>
<keyword id="KW-0482">Metalloprotease</keyword>
<keyword id="KW-0489">Methyltransferase</keyword>
<keyword id="KW-0511">Multifunctional enzyme</keyword>
<keyword id="KW-0645">Protease</keyword>
<keyword id="KW-1185">Reference proteome</keyword>
<keyword id="KW-0735">Signal-anchor</keyword>
<keyword id="KW-0808">Transferase</keyword>
<keyword id="KW-0812">Transmembrane</keyword>
<keyword id="KW-1133">Transmembrane helix</keyword>
<keyword id="KW-0862">Zinc</keyword>
<feature type="chain" id="PRO_0000443293" description="Endothelin-converting enzyme 2">
    <location>
        <begin position="1"/>
        <end position="811"/>
    </location>
</feature>
<feature type="topological domain" description="Cytoplasmic" evidence="13">
    <location>
        <begin position="1"/>
        <end position="106"/>
    </location>
</feature>
<feature type="transmembrane region" description="Helical; Signal-anchor for type II membrane protein" evidence="13">
    <location>
        <begin position="107"/>
        <end position="127"/>
    </location>
</feature>
<feature type="topological domain" description="Lumenal" evidence="13">
    <location>
        <begin position="128"/>
        <end position="811"/>
    </location>
</feature>
<feature type="domain" description="Peptidase M13" evidence="5">
    <location>
        <begin position="139"/>
        <end position="811"/>
    </location>
</feature>
<feature type="region of interest" description="Disordered" evidence="7">
    <location>
        <begin position="22"/>
        <end position="64"/>
    </location>
</feature>
<feature type="active site" evidence="5 6">
    <location>
        <position position="649"/>
    </location>
</feature>
<feature type="active site" description="Proton donor" evidence="5">
    <location>
        <position position="712"/>
    </location>
</feature>
<feature type="binding site" evidence="5 6">
    <location>
        <position position="648"/>
    </location>
    <ligand>
        <name>Zn(2+)</name>
        <dbReference type="ChEBI" id="CHEBI:29105"/>
        <note>catalytic</note>
    </ligand>
</feature>
<feature type="binding site" evidence="5 6">
    <location>
        <position position="652"/>
    </location>
    <ligand>
        <name>Zn(2+)</name>
        <dbReference type="ChEBI" id="CHEBI:29105"/>
        <note>catalytic</note>
    </ligand>
</feature>
<feature type="binding site" evidence="5">
    <location>
        <position position="708"/>
    </location>
    <ligand>
        <name>Zn(2+)</name>
        <dbReference type="ChEBI" id="CHEBI:29105"/>
        <note>catalytic</note>
    </ligand>
</feature>
<feature type="glycosylation site" description="N-linked (GlcNAc...) asparagine" evidence="4">
    <location>
        <position position="207"/>
    </location>
</feature>
<feature type="glycosylation site" description="N-linked (GlcNAc...) asparagine" evidence="4">
    <location>
        <position position="211"/>
    </location>
</feature>
<feature type="glycosylation site" description="N-linked (GlcNAc...) asparagine" evidence="4">
    <location>
        <position position="252"/>
    </location>
</feature>
<feature type="glycosylation site" description="N-linked (GlcNAc...) asparagine" evidence="4">
    <location>
        <position position="312"/>
    </location>
</feature>
<feature type="glycosylation site" description="N-linked (GlcNAc...) asparagine" evidence="4">
    <location>
        <position position="357"/>
    </location>
</feature>
<feature type="glycosylation site" description="N-linked (GlcNAc...) asparagine" evidence="4">
    <location>
        <position position="424"/>
    </location>
</feature>
<feature type="glycosylation site" description="N-linked (GlcNAc...) asparagine" evidence="4">
    <location>
        <position position="580"/>
    </location>
</feature>
<feature type="glycosylation site" description="N-linked (GlcNAc...) asparagine" evidence="4">
    <location>
        <position position="673"/>
    </location>
</feature>
<feature type="glycosylation site" description="N-linked (GlcNAc...) asparagine" evidence="4">
    <location>
        <position position="681"/>
    </location>
</feature>
<feature type="disulfide bond" evidence="5">
    <location>
        <begin position="140"/>
        <end position="145"/>
    </location>
</feature>
<feature type="disulfide bond" evidence="5">
    <location>
        <begin position="163"/>
        <end position="796"/>
    </location>
</feature>
<feature type="disulfide bond" evidence="5">
    <location>
        <begin position="171"/>
        <end position="756"/>
    </location>
</feature>
<feature type="disulfide bond" evidence="5">
    <location>
        <begin position="227"/>
        <end position="476"/>
    </location>
</feature>
<feature type="disulfide bond" evidence="5">
    <location>
        <begin position="685"/>
        <end position="808"/>
    </location>
</feature>
<feature type="splice variant" id="VSP_059324" description="In isoform ECE2-3.">
    <location>
        <begin position="14"/>
        <end position="88"/>
    </location>
</feature>
<feature type="splice variant" id="VSP_059325" description="In isoform ECE2-2.">
    <location>
        <begin position="43"/>
        <end position="88"/>
    </location>
</feature>
<feature type="sequence variant" id="VAR_037085" description="In dbSNP:rs35875049.">
    <original>R</original>
    <variation>Q</variation>
    <location>
        <position position="499"/>
    </location>
</feature>
<feature type="sequence conflict" description="In Ref. 6; AAI42951." evidence="13" ref="6">
    <original>F</original>
    <variation>S</variation>
    <location>
        <position position="395"/>
    </location>
</feature>
<feature type="sequence conflict" description="In Ref. 4; AAQ89362." evidence="13" ref="4">
    <original>A</original>
    <variation>T</variation>
    <location>
        <position position="711"/>
    </location>
</feature>
<name>ECE2_HUMAN</name>
<comment type="function">
    <text evidence="1 8">Converts big endothelin-1 to endothelin-1. Also involved in the processing of various neuroendocrine peptides, including neurotensin, angiotensin I, substance P, proenkephalin-derived peptides, and prodynorphin-derived peptides. May play a role in amyloid-beta processing (By similarity).</text>
</comment>
<comment type="catalytic activity">
    <reaction evidence="8">
        <text>Hydrolysis of the 21-Trp-|-Val-22 bond in big endothelin to form endothelin 1.</text>
        <dbReference type="EC" id="3.4.24.71"/>
    </reaction>
</comment>
<comment type="cofactor">
    <cofactor evidence="3">
        <name>Zn(2+)</name>
        <dbReference type="ChEBI" id="CHEBI:29105"/>
    </cofactor>
    <text evidence="3">Binds 1 zinc ion per subunit.</text>
</comment>
<comment type="biophysicochemical properties">
    <kinetics>
        <KM evidence="8">0.4 uM for big ET-1</KM>
        <KM evidence="8">1.4 uM for peptide E</KM>
        <KM evidence="8">27.4 uM for bradykinin</KM>
        <KM evidence="8">48.4 uM for dynorphin B</KM>
    </kinetics>
    <phDependence>
        <text evidence="8">Optimum pH is 5.0-5.5. Inactive at neutral pH.</text>
    </phDependence>
</comment>
<comment type="interaction">
    <interactant intactId="EBI-19128181">
        <id>P0DPD6-3</id>
    </interactant>
    <interactant intactId="EBI-6657396">
        <id>P19397</id>
        <label>CD53</label>
    </interactant>
    <organismsDiffer>false</organismsDiffer>
    <experiments>3</experiments>
</comment>
<comment type="subcellular location">
    <subcellularLocation>
        <location evidence="2">Golgi apparatus membrane</location>
        <topology evidence="13">Single-pass type II membrane protein</topology>
    </subcellularLocation>
    <subcellularLocation>
        <location evidence="2">Cytoplasmic vesicle</location>
        <location evidence="2">Secretory vesicle membrane</location>
    </subcellularLocation>
</comment>
<comment type="alternative products">
    <event type="alternative splicing"/>
    <isoform>
        <id>P0DPD6-4</id>
        <id>O60344-5</id>
        <name>ECE2-1</name>
        <name evidence="12">ECE2-2C</name>
        <sequence type="displayed"/>
    </isoform>
    <isoform>
        <id>P0DPD6-2</id>
        <id>O60344-2</id>
        <name>ECE2-2</name>
        <name evidence="9">ECE-2B</name>
        <sequence type="described" ref="VSP_059325"/>
    </isoform>
    <isoform>
        <id>P0DPD6-3</id>
        <id>O60344-3</id>
        <name>ECE2-3</name>
        <sequence type="described" ref="VSP_059324"/>
    </isoform>
    <isoform>
        <id>P0DPD8-1</id>
        <id>O60344-1</id>
        <name>EEF1AKMT4-ECE2-1</name>
        <name evidence="9">ECE-2A</name>
        <sequence type="external"/>
    </isoform>
</comment>
<comment type="similarity">
    <text evidence="5 13">Belongs to the peptidase M13 family.</text>
</comment>
<comment type="sequence caution" evidence="13">
    <conflict type="erroneous initiation">
        <sequence resource="EMBL-CDS" id="BAA25530"/>
    </conflict>
    <text>Extended N-terminus.</text>
</comment>
<reference key="1">
    <citation type="journal article" date="2001" name="Biochim. Biophys. Acta">
        <title>Human endothelin converting enzyme-2 (ECE2): characterization of mRNA species and chromosomal localization.</title>
        <authorList>
            <person name="Lorenzo M.-N."/>
            <person name="Khan R.Y."/>
            <person name="Wang Y."/>
            <person name="Tai S.C."/>
            <person name="Chan G.C."/>
            <person name="Cheung A.H."/>
            <person name="Marsden P.A."/>
        </authorList>
    </citation>
    <scope>NUCLEOTIDE SEQUENCE [MRNA] (ISOFORMS ECE2-2 AND ECE2-3)</scope>
    <scope>ALTERNATIVE SPLICING</scope>
</reference>
<reference key="2">
    <citation type="submission" date="2002-06" db="EMBL/GenBank/DDBJ databases">
        <title>Human endothelin-converting enzyme-2C (ECE-2C): a new ECE-2 variant.</title>
        <authorList>
            <person name="Funke-Kaiser H."/>
            <person name="Scheuch K."/>
            <person name="Behrouzi T."/>
            <person name="Synowitz M."/>
            <person name="Draheim N."/>
            <person name="Schwaneberg B."/>
            <person name="Thomas A."/>
            <person name="Zollmann F.S."/>
            <person name="Paul M."/>
            <person name="Orzechowski H.D."/>
        </authorList>
    </citation>
    <scope>NUCLEOTIDE SEQUENCE [MRNA] (ISOFORM ECE2-1)</scope>
    <source>
        <tissue>Thalamus</tissue>
    </source>
</reference>
<reference key="3">
    <citation type="journal article" date="1998" name="DNA Res.">
        <title>Prediction of the coding sequences of unidentified human genes. IX. The complete sequences of 100 new cDNA clones from brain which can code for large proteins in vitro.</title>
        <authorList>
            <person name="Nagase T."/>
            <person name="Ishikawa K."/>
            <person name="Miyajima N."/>
            <person name="Tanaka A."/>
            <person name="Kotani H."/>
            <person name="Nomura N."/>
            <person name="Ohara O."/>
        </authorList>
    </citation>
    <scope>NUCLEOTIDE SEQUENCE [LARGE SCALE MRNA] (ISOFORM ECE2-2)</scope>
    <source>
        <tissue>Brain</tissue>
    </source>
</reference>
<reference key="4">
    <citation type="journal article" date="2003" name="Genome Res.">
        <title>The secreted protein discovery initiative (SPDI), a large-scale effort to identify novel human secreted and transmembrane proteins: a bioinformatics assessment.</title>
        <authorList>
            <person name="Clark H.F."/>
            <person name="Gurney A.L."/>
            <person name="Abaya E."/>
            <person name="Baker K."/>
            <person name="Baldwin D.T."/>
            <person name="Brush J."/>
            <person name="Chen J."/>
            <person name="Chow B."/>
            <person name="Chui C."/>
            <person name="Crowley C."/>
            <person name="Currell B."/>
            <person name="Deuel B."/>
            <person name="Dowd P."/>
            <person name="Eaton D."/>
            <person name="Foster J.S."/>
            <person name="Grimaldi C."/>
            <person name="Gu Q."/>
            <person name="Hass P.E."/>
            <person name="Heldens S."/>
            <person name="Huang A."/>
            <person name="Kim H.S."/>
            <person name="Klimowski L."/>
            <person name="Jin Y."/>
            <person name="Johnson S."/>
            <person name="Lee J."/>
            <person name="Lewis L."/>
            <person name="Liao D."/>
            <person name="Mark M.R."/>
            <person name="Robbie E."/>
            <person name="Sanchez C."/>
            <person name="Schoenfeld J."/>
            <person name="Seshagiri S."/>
            <person name="Simmons L."/>
            <person name="Singh J."/>
            <person name="Smith V."/>
            <person name="Stinson J."/>
            <person name="Vagts A."/>
            <person name="Vandlen R.L."/>
            <person name="Watanabe C."/>
            <person name="Wieand D."/>
            <person name="Woods K."/>
            <person name="Xie M.-H."/>
            <person name="Yansura D.G."/>
            <person name="Yi S."/>
            <person name="Yu G."/>
            <person name="Yuan J."/>
            <person name="Zhang M."/>
            <person name="Zhang Z."/>
            <person name="Goddard A.D."/>
            <person name="Wood W.I."/>
            <person name="Godowski P.J."/>
            <person name="Gray A.M."/>
        </authorList>
    </citation>
    <scope>NUCLEOTIDE SEQUENCE [LARGE SCALE MRNA] (ISOFORM ECE2-3)</scope>
</reference>
<reference key="5">
    <citation type="journal article" date="2006" name="Nature">
        <title>The DNA sequence, annotation and analysis of human chromosome 3.</title>
        <authorList>
            <person name="Muzny D.M."/>
            <person name="Scherer S.E."/>
            <person name="Kaul R."/>
            <person name="Wang J."/>
            <person name="Yu J."/>
            <person name="Sudbrak R."/>
            <person name="Buhay C.J."/>
            <person name="Chen R."/>
            <person name="Cree A."/>
            <person name="Ding Y."/>
            <person name="Dugan-Rocha S."/>
            <person name="Gill R."/>
            <person name="Gunaratne P."/>
            <person name="Harris R.A."/>
            <person name="Hawes A.C."/>
            <person name="Hernandez J."/>
            <person name="Hodgson A.V."/>
            <person name="Hume J."/>
            <person name="Jackson A."/>
            <person name="Khan Z.M."/>
            <person name="Kovar-Smith C."/>
            <person name="Lewis L.R."/>
            <person name="Lozado R.J."/>
            <person name="Metzker M.L."/>
            <person name="Milosavljevic A."/>
            <person name="Miner G.R."/>
            <person name="Morgan M.B."/>
            <person name="Nazareth L.V."/>
            <person name="Scott G."/>
            <person name="Sodergren E."/>
            <person name="Song X.-Z."/>
            <person name="Steffen D."/>
            <person name="Wei S."/>
            <person name="Wheeler D.A."/>
            <person name="Wright M.W."/>
            <person name="Worley K.C."/>
            <person name="Yuan Y."/>
            <person name="Zhang Z."/>
            <person name="Adams C.Q."/>
            <person name="Ansari-Lari M.A."/>
            <person name="Ayele M."/>
            <person name="Brown M.J."/>
            <person name="Chen G."/>
            <person name="Chen Z."/>
            <person name="Clendenning J."/>
            <person name="Clerc-Blankenburg K.P."/>
            <person name="Chen R."/>
            <person name="Chen Z."/>
            <person name="Davis C."/>
            <person name="Delgado O."/>
            <person name="Dinh H.H."/>
            <person name="Dong W."/>
            <person name="Draper H."/>
            <person name="Ernst S."/>
            <person name="Fu G."/>
            <person name="Gonzalez-Garay M.L."/>
            <person name="Garcia D.K."/>
            <person name="Gillett W."/>
            <person name="Gu J."/>
            <person name="Hao B."/>
            <person name="Haugen E."/>
            <person name="Havlak P."/>
            <person name="He X."/>
            <person name="Hennig S."/>
            <person name="Hu S."/>
            <person name="Huang W."/>
            <person name="Jackson L.R."/>
            <person name="Jacob L.S."/>
            <person name="Kelly S.H."/>
            <person name="Kube M."/>
            <person name="Levy R."/>
            <person name="Li Z."/>
            <person name="Liu B."/>
            <person name="Liu J."/>
            <person name="Liu W."/>
            <person name="Lu J."/>
            <person name="Maheshwari M."/>
            <person name="Nguyen B.-V."/>
            <person name="Okwuonu G.O."/>
            <person name="Palmeiri A."/>
            <person name="Pasternak S."/>
            <person name="Perez L.M."/>
            <person name="Phelps K.A."/>
            <person name="Plopper F.J."/>
            <person name="Qiang B."/>
            <person name="Raymond C."/>
            <person name="Rodriguez R."/>
            <person name="Saenphimmachak C."/>
            <person name="Santibanez J."/>
            <person name="Shen H."/>
            <person name="Shen Y."/>
            <person name="Subramanian S."/>
            <person name="Tabor P.E."/>
            <person name="Verduzco D."/>
            <person name="Waldron L."/>
            <person name="Wang J."/>
            <person name="Wang J."/>
            <person name="Wang Q."/>
            <person name="Williams G.A."/>
            <person name="Wong G.K.-S."/>
            <person name="Yao Z."/>
            <person name="Zhang J."/>
            <person name="Zhang X."/>
            <person name="Zhao G."/>
            <person name="Zhou J."/>
            <person name="Zhou Y."/>
            <person name="Nelson D."/>
            <person name="Lehrach H."/>
            <person name="Reinhardt R."/>
            <person name="Naylor S.L."/>
            <person name="Yang H."/>
            <person name="Olson M."/>
            <person name="Weinstock G."/>
            <person name="Gibbs R.A."/>
        </authorList>
    </citation>
    <scope>NUCLEOTIDE SEQUENCE [LARGE SCALE GENOMIC DNA]</scope>
</reference>
<reference key="6">
    <citation type="journal article" date="2004" name="Genome Res.">
        <title>The status, quality, and expansion of the NIH full-length cDNA project: the Mammalian Gene Collection (MGC).</title>
        <authorList>
            <consortium name="The MGC Project Team"/>
        </authorList>
    </citation>
    <scope>NUCLEOTIDE SEQUENCE [LARGE SCALE MRNA] (ISOFORM ECE2-3)</scope>
    <source>
        <tissue>Lung</tissue>
        <tissue>Ovary</tissue>
    </source>
</reference>
<reference key="7">
    <citation type="journal article" date="2003" name="J. Biol. Chem.">
        <title>Characterization of endothelin-converting enzyme-2. Implication for a role in the nonclassical processing of regulatory peptides.</title>
        <authorList>
            <person name="Mzhavia N."/>
            <person name="Pan H."/>
            <person name="Che F.-Y."/>
            <person name="Fricker L.D."/>
            <person name="Devi L.A."/>
        </authorList>
    </citation>
    <scope>FUNCTION</scope>
    <scope>BIOPHYSICOCHEMICAL PROPERTIES</scope>
    <scope>CATALYTIC ACTIVITY</scope>
</reference>
<protein>
    <recommendedName>
        <fullName evidence="9">Endothelin-converting enzyme 2</fullName>
        <shortName>ECE-2</shortName>
        <ecNumber evidence="8">3.4.24.71</ecNumber>
    </recommendedName>
</protein>